<protein>
    <recommendedName>
        <fullName>Cytochrome c</fullName>
    </recommendedName>
</protein>
<comment type="function">
    <text>Electron carrier protein. The oxidized form of the cytochrome c heme group can accept an electron from the heme group of the cytochrome c1 subunit of cytochrome reductase. Cytochrome c then transfers this electron to the cytochrome oxidase complex, the final protein carrier in the mitochondrial electron-transport chain.</text>
</comment>
<comment type="subcellular location">
    <subcellularLocation>
        <location>Mitochondrion intermembrane space</location>
    </subcellularLocation>
    <text>Loosely associated with the inner membrane.</text>
</comment>
<comment type="PTM">
    <text>Binds 1 heme c group covalently per subunit.</text>
</comment>
<comment type="similarity">
    <text evidence="3">Belongs to the cytochrome c family.</text>
</comment>
<comment type="online information" name="Protein Spotlight">
    <link uri="https://www.proteinspotlight.org/back_issues/076"/>
    <text>Life shuttle - Issue 76 of November 2006</text>
</comment>
<name>CYC_USTSP</name>
<organism>
    <name type="scientific">Ustilago sphaerogena</name>
    <name type="common">Smut fungus</name>
    <dbReference type="NCBI Taxonomy" id="5271"/>
    <lineage>
        <taxon>Eukaryota</taxon>
        <taxon>Fungi</taxon>
        <taxon>Dikarya</taxon>
        <taxon>Basidiomycota</taxon>
        <taxon>Ustilaginomycotina</taxon>
        <taxon>Ustilaginomycetes</taxon>
        <taxon>Ustilaginales</taxon>
        <taxon>Ustilaginaceae</taxon>
        <taxon>Ustilago</taxon>
    </lineage>
</organism>
<accession>P00049</accession>
<keyword id="KW-0903">Direct protein sequencing</keyword>
<keyword id="KW-0249">Electron transport</keyword>
<keyword id="KW-0349">Heme</keyword>
<keyword id="KW-0408">Iron</keyword>
<keyword id="KW-0479">Metal-binding</keyword>
<keyword id="KW-0488">Methylation</keyword>
<keyword id="KW-0496">Mitochondrion</keyword>
<keyword id="KW-0679">Respiratory chain</keyword>
<keyword id="KW-0813">Transport</keyword>
<reference key="1">
    <citation type="journal article" date="1972" name="Biochem. J.">
        <title>The primary structure of cytochrome c from the rust fungus Ustilago sphaerogena.</title>
        <authorList>
            <person name="Bitar K.G."/>
            <person name="Vinogradov S.N."/>
            <person name="Nolan C."/>
            <person name="Weiss L.J."/>
            <person name="Margoliash E."/>
        </authorList>
    </citation>
    <scope>PROTEIN SEQUENCE</scope>
    <source>
        <strain>ATCC 12421 / CBS 534.71 / IMI 61828 / 50-135</strain>
    </source>
</reference>
<dbReference type="PIR" id="A00042">
    <property type="entry name" value="CCUS"/>
</dbReference>
<dbReference type="SMR" id="P00049"/>
<dbReference type="GO" id="GO:0005758">
    <property type="term" value="C:mitochondrial intermembrane space"/>
    <property type="evidence" value="ECO:0007669"/>
    <property type="project" value="UniProtKB-SubCell"/>
</dbReference>
<dbReference type="GO" id="GO:0009055">
    <property type="term" value="F:electron transfer activity"/>
    <property type="evidence" value="ECO:0007669"/>
    <property type="project" value="InterPro"/>
</dbReference>
<dbReference type="GO" id="GO:0020037">
    <property type="term" value="F:heme binding"/>
    <property type="evidence" value="ECO:0007669"/>
    <property type="project" value="InterPro"/>
</dbReference>
<dbReference type="GO" id="GO:0046872">
    <property type="term" value="F:metal ion binding"/>
    <property type="evidence" value="ECO:0007669"/>
    <property type="project" value="UniProtKB-KW"/>
</dbReference>
<dbReference type="FunFam" id="1.10.760.10:FF:000001">
    <property type="entry name" value="Cytochrome c iso-1"/>
    <property type="match status" value="1"/>
</dbReference>
<dbReference type="Gene3D" id="1.10.760.10">
    <property type="entry name" value="Cytochrome c-like domain"/>
    <property type="match status" value="1"/>
</dbReference>
<dbReference type="InterPro" id="IPR009056">
    <property type="entry name" value="Cyt_c-like_dom"/>
</dbReference>
<dbReference type="InterPro" id="IPR036909">
    <property type="entry name" value="Cyt_c-like_dom_sf"/>
</dbReference>
<dbReference type="InterPro" id="IPR002327">
    <property type="entry name" value="Cyt_c_1A/1B"/>
</dbReference>
<dbReference type="PANTHER" id="PTHR11961">
    <property type="entry name" value="CYTOCHROME C"/>
    <property type="match status" value="1"/>
</dbReference>
<dbReference type="Pfam" id="PF00034">
    <property type="entry name" value="Cytochrom_C"/>
    <property type="match status" value="1"/>
</dbReference>
<dbReference type="PRINTS" id="PR00604">
    <property type="entry name" value="CYTCHRMECIAB"/>
</dbReference>
<dbReference type="SUPFAM" id="SSF46626">
    <property type="entry name" value="Cytochrome c"/>
    <property type="match status" value="1"/>
</dbReference>
<dbReference type="PROSITE" id="PS51007">
    <property type="entry name" value="CYTC"/>
    <property type="match status" value="1"/>
</dbReference>
<evidence type="ECO:0000255" key="1">
    <source>
        <dbReference type="PROSITE-ProRule" id="PRU00433"/>
    </source>
</evidence>
<evidence type="ECO:0000269" key="2">
    <source>
    </source>
</evidence>
<evidence type="ECO:0000305" key="3"/>
<feature type="chain" id="PRO_0000108335" description="Cytochrome c">
    <location>
        <begin position="1"/>
        <end position="107"/>
    </location>
</feature>
<feature type="binding site" description="covalent" evidence="1 2">
    <location>
        <position position="18"/>
    </location>
    <ligand>
        <name>heme c</name>
        <dbReference type="ChEBI" id="CHEBI:61717"/>
    </ligand>
</feature>
<feature type="binding site" description="covalent" evidence="1 2">
    <location>
        <position position="21"/>
    </location>
    <ligand>
        <name>heme c</name>
        <dbReference type="ChEBI" id="CHEBI:61717"/>
    </ligand>
</feature>
<feature type="binding site" description="axial binding residue">
    <location>
        <position position="22"/>
    </location>
    <ligand>
        <name>heme c</name>
        <dbReference type="ChEBI" id="CHEBI:61717"/>
    </ligand>
    <ligandPart>
        <name>Fe</name>
        <dbReference type="ChEBI" id="CHEBI:18248"/>
    </ligandPart>
</feature>
<feature type="binding site" description="axial binding residue">
    <location>
        <position position="84"/>
    </location>
    <ligand>
        <name>heme c</name>
        <dbReference type="ChEBI" id="CHEBI:61717"/>
    </ligand>
    <ligandPart>
        <name>Fe</name>
        <dbReference type="ChEBI" id="CHEBI:18248"/>
    </ligandPart>
</feature>
<sequence>GFEDGDAKKGARIFKTRCAQCHTLGAGEPNKVGPNLHGLFGRKSGTVEGFSYTDANKKAGQVWEEETFLEYLENPKKYIPGTKMAFGGLKKEKDRNDLVTYLREETK</sequence>
<proteinExistence type="evidence at protein level"/>